<proteinExistence type="inferred from homology"/>
<accession>Q9HEK4</accession>
<sequence length="216" mass="24613">MASLKSLLSGFLLLAGAAQALKFDLEATSSHHSNQRRCIRNFVNKDTLVVVTATLDGYKGDGMNVNMHISDSHGNEYGKAKDIAGEQRIVFTSHHDAAFDVCFENYLTGSKYVENPRRHVELDIDIGADAKDWSAIQATEKLKPLETDLRRIEELVGEVVNEMDYLRAREQKLRDTNESTNNRVKWFGMATTFLLIALWGWQIMYLRAYFRSKHLI</sequence>
<gene>
    <name type="primary">erv-1</name>
    <name type="synonym">erv25</name>
    <name type="ORF">12F11.230</name>
    <name type="ORF">NCU01342</name>
</gene>
<name>TMEDA_NEUCR</name>
<reference key="1">
    <citation type="journal article" date="2003" name="Nature">
        <title>The genome sequence of the filamentous fungus Neurospora crassa.</title>
        <authorList>
            <person name="Galagan J.E."/>
            <person name="Calvo S.E."/>
            <person name="Borkovich K.A."/>
            <person name="Selker E.U."/>
            <person name="Read N.D."/>
            <person name="Jaffe D.B."/>
            <person name="FitzHugh W."/>
            <person name="Ma L.-J."/>
            <person name="Smirnov S."/>
            <person name="Purcell S."/>
            <person name="Rehman B."/>
            <person name="Elkins T."/>
            <person name="Engels R."/>
            <person name="Wang S."/>
            <person name="Nielsen C.B."/>
            <person name="Butler J."/>
            <person name="Endrizzi M."/>
            <person name="Qui D."/>
            <person name="Ianakiev P."/>
            <person name="Bell-Pedersen D."/>
            <person name="Nelson M.A."/>
            <person name="Werner-Washburne M."/>
            <person name="Selitrennikoff C.P."/>
            <person name="Kinsey J.A."/>
            <person name="Braun E.L."/>
            <person name="Zelter A."/>
            <person name="Schulte U."/>
            <person name="Kothe G.O."/>
            <person name="Jedd G."/>
            <person name="Mewes H.-W."/>
            <person name="Staben C."/>
            <person name="Marcotte E."/>
            <person name="Greenberg D."/>
            <person name="Roy A."/>
            <person name="Foley K."/>
            <person name="Naylor J."/>
            <person name="Stange-Thomann N."/>
            <person name="Barrett R."/>
            <person name="Gnerre S."/>
            <person name="Kamal M."/>
            <person name="Kamvysselis M."/>
            <person name="Mauceli E.W."/>
            <person name="Bielke C."/>
            <person name="Rudd S."/>
            <person name="Frishman D."/>
            <person name="Krystofova S."/>
            <person name="Rasmussen C."/>
            <person name="Metzenberg R.L."/>
            <person name="Perkins D.D."/>
            <person name="Kroken S."/>
            <person name="Cogoni C."/>
            <person name="Macino G."/>
            <person name="Catcheside D.E.A."/>
            <person name="Li W."/>
            <person name="Pratt R.J."/>
            <person name="Osmani S.A."/>
            <person name="DeSouza C.P.C."/>
            <person name="Glass N.L."/>
            <person name="Orbach M.J."/>
            <person name="Berglund J.A."/>
            <person name="Voelker R."/>
            <person name="Yarden O."/>
            <person name="Plamann M."/>
            <person name="Seiler S."/>
            <person name="Dunlap J.C."/>
            <person name="Radford A."/>
            <person name="Aramayo R."/>
            <person name="Natvig D.O."/>
            <person name="Alex L.A."/>
            <person name="Mannhaupt G."/>
            <person name="Ebbole D.J."/>
            <person name="Freitag M."/>
            <person name="Paulsen I."/>
            <person name="Sachs M.S."/>
            <person name="Lander E.S."/>
            <person name="Nusbaum C."/>
            <person name="Birren B.W."/>
        </authorList>
    </citation>
    <scope>NUCLEOTIDE SEQUENCE [LARGE SCALE GENOMIC DNA]</scope>
    <source>
        <strain>ATCC 24698 / 74-OR23-1A / CBS 708.71 / DSM 1257 / FGSC 987</strain>
    </source>
</reference>
<comment type="function">
    <text evidence="1">Constituent of COPII-coated endoplasmic reticulum-derived transport vesicles. Required for efficient transport of a subset of secretory proteins to the Golgi. Facilitates retrograde transport from the Golgi to the endoplasmic reticulum (By similarity).</text>
</comment>
<comment type="subcellular location">
    <subcellularLocation>
        <location evidence="1">Endoplasmic reticulum membrane</location>
        <topology evidence="1">Single-pass type I membrane protein</topology>
    </subcellularLocation>
    <subcellularLocation>
        <location evidence="1">Golgi apparatus membrane</location>
        <topology evidence="1">Single-pass type I membrane protein</topology>
    </subcellularLocation>
    <text evidence="1">Recycles between endoplasmic reticulum and Golgi.</text>
</comment>
<comment type="similarity">
    <text evidence="4">Belongs to the EMP24/GP25L family.</text>
</comment>
<comment type="sequence caution" evidence="4">
    <conflict type="erroneous gene model prediction">
        <sequence resource="EMBL-CDS" id="CAC18232"/>
    </conflict>
</comment>
<protein>
    <recommendedName>
        <fullName>Endoplasmic reticulum vesicle protein 25</fullName>
    </recommendedName>
</protein>
<evidence type="ECO:0000250" key="1"/>
<evidence type="ECO:0000255" key="2"/>
<evidence type="ECO:0000255" key="3">
    <source>
        <dbReference type="PROSITE-ProRule" id="PRU00096"/>
    </source>
</evidence>
<evidence type="ECO:0000305" key="4"/>
<feature type="signal peptide" evidence="2">
    <location>
        <begin position="1"/>
        <end position="20"/>
    </location>
</feature>
<feature type="chain" id="PRO_0000237696" description="Endoplasmic reticulum vesicle protein 25">
    <location>
        <begin position="21"/>
        <end position="216"/>
    </location>
</feature>
<feature type="topological domain" description="Lumenal" evidence="2">
    <location>
        <begin position="21"/>
        <end position="185"/>
    </location>
</feature>
<feature type="transmembrane region" description="Helical" evidence="2">
    <location>
        <begin position="186"/>
        <end position="206"/>
    </location>
</feature>
<feature type="topological domain" description="Cytoplasmic" evidence="2">
    <location>
        <begin position="207"/>
        <end position="216"/>
    </location>
</feature>
<feature type="domain" description="GOLD" evidence="3">
    <location>
        <begin position="36"/>
        <end position="126"/>
    </location>
</feature>
<dbReference type="EMBL" id="AL451017">
    <property type="protein sequence ID" value="CAC18232.1"/>
    <property type="status" value="ALT_SEQ"/>
    <property type="molecule type" value="Genomic_DNA"/>
</dbReference>
<dbReference type="EMBL" id="CM002240">
    <property type="protein sequence ID" value="EAA32192.3"/>
    <property type="molecule type" value="Genomic_DNA"/>
</dbReference>
<dbReference type="RefSeq" id="XP_961428.3">
    <property type="nucleotide sequence ID" value="XM_956335.3"/>
</dbReference>
<dbReference type="SMR" id="Q9HEK4"/>
<dbReference type="FunCoup" id="Q9HEK4">
    <property type="interactions" value="1115"/>
</dbReference>
<dbReference type="STRING" id="367110.Q9HEK4"/>
<dbReference type="PaxDb" id="5141-EFNCRP00000004098"/>
<dbReference type="EnsemblFungi" id="EAA32192">
    <property type="protein sequence ID" value="EAA32192"/>
    <property type="gene ID" value="NCU01342"/>
</dbReference>
<dbReference type="GeneID" id="3877556"/>
<dbReference type="KEGG" id="ncr:NCU01342"/>
<dbReference type="VEuPathDB" id="FungiDB:NCU01342"/>
<dbReference type="HOGENOM" id="CLU_066963_3_0_1"/>
<dbReference type="InParanoid" id="Q9HEK4"/>
<dbReference type="OrthoDB" id="759142at2759"/>
<dbReference type="Proteomes" id="UP000001805">
    <property type="component" value="Chromosome 2, Linkage Group V"/>
</dbReference>
<dbReference type="GO" id="GO:0030134">
    <property type="term" value="C:COPII-coated ER to Golgi transport vesicle"/>
    <property type="evidence" value="ECO:0000318"/>
    <property type="project" value="GO_Central"/>
</dbReference>
<dbReference type="GO" id="GO:0005783">
    <property type="term" value="C:endoplasmic reticulum"/>
    <property type="evidence" value="ECO:0000318"/>
    <property type="project" value="GO_Central"/>
</dbReference>
<dbReference type="GO" id="GO:0005789">
    <property type="term" value="C:endoplasmic reticulum membrane"/>
    <property type="evidence" value="ECO:0007669"/>
    <property type="project" value="UniProtKB-SubCell"/>
</dbReference>
<dbReference type="GO" id="GO:0005793">
    <property type="term" value="C:endoplasmic reticulum-Golgi intermediate compartment"/>
    <property type="evidence" value="ECO:0000318"/>
    <property type="project" value="GO_Central"/>
</dbReference>
<dbReference type="GO" id="GO:0005794">
    <property type="term" value="C:Golgi apparatus"/>
    <property type="evidence" value="ECO:0000318"/>
    <property type="project" value="GO_Central"/>
</dbReference>
<dbReference type="GO" id="GO:0000139">
    <property type="term" value="C:Golgi membrane"/>
    <property type="evidence" value="ECO:0007669"/>
    <property type="project" value="UniProtKB-SubCell"/>
</dbReference>
<dbReference type="GO" id="GO:0006888">
    <property type="term" value="P:endoplasmic reticulum to Golgi vesicle-mediated transport"/>
    <property type="evidence" value="ECO:0000318"/>
    <property type="project" value="GO_Central"/>
</dbReference>
<dbReference type="GO" id="GO:0007030">
    <property type="term" value="P:Golgi organization"/>
    <property type="evidence" value="ECO:0000318"/>
    <property type="project" value="GO_Central"/>
</dbReference>
<dbReference type="GO" id="GO:0006886">
    <property type="term" value="P:intracellular protein transport"/>
    <property type="evidence" value="ECO:0000318"/>
    <property type="project" value="GO_Central"/>
</dbReference>
<dbReference type="InterPro" id="IPR015720">
    <property type="entry name" value="Emp24-like"/>
</dbReference>
<dbReference type="InterPro" id="IPR009038">
    <property type="entry name" value="GOLD_dom"/>
</dbReference>
<dbReference type="PANTHER" id="PTHR22811">
    <property type="entry name" value="TRANSMEMBRANE EMP24 DOMAIN-CONTAINING PROTEIN"/>
    <property type="match status" value="1"/>
</dbReference>
<dbReference type="Pfam" id="PF01105">
    <property type="entry name" value="EMP24_GP25L"/>
    <property type="match status" value="1"/>
</dbReference>
<dbReference type="SMART" id="SM01190">
    <property type="entry name" value="EMP24_GP25L"/>
    <property type="match status" value="1"/>
</dbReference>
<dbReference type="PROSITE" id="PS50866">
    <property type="entry name" value="GOLD"/>
    <property type="match status" value="1"/>
</dbReference>
<organism>
    <name type="scientific">Neurospora crassa (strain ATCC 24698 / 74-OR23-1A / CBS 708.71 / DSM 1257 / FGSC 987)</name>
    <dbReference type="NCBI Taxonomy" id="367110"/>
    <lineage>
        <taxon>Eukaryota</taxon>
        <taxon>Fungi</taxon>
        <taxon>Dikarya</taxon>
        <taxon>Ascomycota</taxon>
        <taxon>Pezizomycotina</taxon>
        <taxon>Sordariomycetes</taxon>
        <taxon>Sordariomycetidae</taxon>
        <taxon>Sordariales</taxon>
        <taxon>Sordariaceae</taxon>
        <taxon>Neurospora</taxon>
    </lineage>
</organism>
<keyword id="KW-0256">Endoplasmic reticulum</keyword>
<keyword id="KW-0931">ER-Golgi transport</keyword>
<keyword id="KW-0333">Golgi apparatus</keyword>
<keyword id="KW-0472">Membrane</keyword>
<keyword id="KW-0653">Protein transport</keyword>
<keyword id="KW-1185">Reference proteome</keyword>
<keyword id="KW-0732">Signal</keyword>
<keyword id="KW-0812">Transmembrane</keyword>
<keyword id="KW-1133">Transmembrane helix</keyword>
<keyword id="KW-0813">Transport</keyword>